<comment type="function">
    <text evidence="1">Catalyzes the transfer of a phosphate group to glutamate to form L-glutamate 5-phosphate.</text>
</comment>
<comment type="catalytic activity">
    <reaction evidence="1">
        <text>L-glutamate + ATP = L-glutamyl 5-phosphate + ADP</text>
        <dbReference type="Rhea" id="RHEA:14877"/>
        <dbReference type="ChEBI" id="CHEBI:29985"/>
        <dbReference type="ChEBI" id="CHEBI:30616"/>
        <dbReference type="ChEBI" id="CHEBI:58274"/>
        <dbReference type="ChEBI" id="CHEBI:456216"/>
        <dbReference type="EC" id="2.7.2.11"/>
    </reaction>
</comment>
<comment type="pathway">
    <text evidence="1">Amino-acid biosynthesis; L-proline biosynthesis; L-glutamate 5-semialdehyde from L-glutamate: step 1/2.</text>
</comment>
<comment type="subcellular location">
    <subcellularLocation>
        <location evidence="1">Cytoplasm</location>
    </subcellularLocation>
</comment>
<comment type="similarity">
    <text evidence="1">Belongs to the glutamate 5-kinase family.</text>
</comment>
<dbReference type="EC" id="2.7.2.11" evidence="1"/>
<dbReference type="EMBL" id="AM902716">
    <property type="protein sequence ID" value="CAP45031.1"/>
    <property type="molecule type" value="Genomic_DNA"/>
</dbReference>
<dbReference type="SMR" id="A9IFG1"/>
<dbReference type="STRING" id="94624.Bpet4680"/>
<dbReference type="KEGG" id="bpt:Bpet4680"/>
<dbReference type="eggNOG" id="COG0263">
    <property type="taxonomic scope" value="Bacteria"/>
</dbReference>
<dbReference type="UniPathway" id="UPA00098">
    <property type="reaction ID" value="UER00359"/>
</dbReference>
<dbReference type="Proteomes" id="UP000001225">
    <property type="component" value="Chromosome"/>
</dbReference>
<dbReference type="GO" id="GO:0005829">
    <property type="term" value="C:cytosol"/>
    <property type="evidence" value="ECO:0007669"/>
    <property type="project" value="TreeGrafter"/>
</dbReference>
<dbReference type="GO" id="GO:0005524">
    <property type="term" value="F:ATP binding"/>
    <property type="evidence" value="ECO:0007669"/>
    <property type="project" value="UniProtKB-KW"/>
</dbReference>
<dbReference type="GO" id="GO:0004349">
    <property type="term" value="F:glutamate 5-kinase activity"/>
    <property type="evidence" value="ECO:0007669"/>
    <property type="project" value="UniProtKB-UniRule"/>
</dbReference>
<dbReference type="GO" id="GO:0003723">
    <property type="term" value="F:RNA binding"/>
    <property type="evidence" value="ECO:0007669"/>
    <property type="project" value="InterPro"/>
</dbReference>
<dbReference type="GO" id="GO:0055129">
    <property type="term" value="P:L-proline biosynthetic process"/>
    <property type="evidence" value="ECO:0007669"/>
    <property type="project" value="UniProtKB-UniRule"/>
</dbReference>
<dbReference type="CDD" id="cd04242">
    <property type="entry name" value="AAK_G5K_ProB"/>
    <property type="match status" value="1"/>
</dbReference>
<dbReference type="CDD" id="cd21157">
    <property type="entry name" value="PUA_G5K"/>
    <property type="match status" value="1"/>
</dbReference>
<dbReference type="FunFam" id="2.30.130.10:FF:000007">
    <property type="entry name" value="Glutamate 5-kinase"/>
    <property type="match status" value="1"/>
</dbReference>
<dbReference type="FunFam" id="3.40.1160.10:FF:000018">
    <property type="entry name" value="Glutamate 5-kinase"/>
    <property type="match status" value="1"/>
</dbReference>
<dbReference type="Gene3D" id="3.40.1160.10">
    <property type="entry name" value="Acetylglutamate kinase-like"/>
    <property type="match status" value="1"/>
</dbReference>
<dbReference type="Gene3D" id="2.30.130.10">
    <property type="entry name" value="PUA domain"/>
    <property type="match status" value="1"/>
</dbReference>
<dbReference type="HAMAP" id="MF_00456">
    <property type="entry name" value="ProB"/>
    <property type="match status" value="1"/>
</dbReference>
<dbReference type="InterPro" id="IPR036393">
    <property type="entry name" value="AceGlu_kinase-like_sf"/>
</dbReference>
<dbReference type="InterPro" id="IPR001048">
    <property type="entry name" value="Asp/Glu/Uridylate_kinase"/>
</dbReference>
<dbReference type="InterPro" id="IPR041739">
    <property type="entry name" value="G5K_ProB"/>
</dbReference>
<dbReference type="InterPro" id="IPR001057">
    <property type="entry name" value="Glu/AcGlu_kinase"/>
</dbReference>
<dbReference type="InterPro" id="IPR011529">
    <property type="entry name" value="Glu_5kinase"/>
</dbReference>
<dbReference type="InterPro" id="IPR005715">
    <property type="entry name" value="Glu_5kinase/COase_Synthase"/>
</dbReference>
<dbReference type="InterPro" id="IPR019797">
    <property type="entry name" value="Glutamate_5-kinase_CS"/>
</dbReference>
<dbReference type="InterPro" id="IPR002478">
    <property type="entry name" value="PUA"/>
</dbReference>
<dbReference type="InterPro" id="IPR015947">
    <property type="entry name" value="PUA-like_sf"/>
</dbReference>
<dbReference type="InterPro" id="IPR036974">
    <property type="entry name" value="PUA_sf"/>
</dbReference>
<dbReference type="NCBIfam" id="TIGR01027">
    <property type="entry name" value="proB"/>
    <property type="match status" value="1"/>
</dbReference>
<dbReference type="PANTHER" id="PTHR43654">
    <property type="entry name" value="GLUTAMATE 5-KINASE"/>
    <property type="match status" value="1"/>
</dbReference>
<dbReference type="PANTHER" id="PTHR43654:SF1">
    <property type="entry name" value="ISOPENTENYL PHOSPHATE KINASE"/>
    <property type="match status" value="1"/>
</dbReference>
<dbReference type="Pfam" id="PF00696">
    <property type="entry name" value="AA_kinase"/>
    <property type="match status" value="1"/>
</dbReference>
<dbReference type="Pfam" id="PF01472">
    <property type="entry name" value="PUA"/>
    <property type="match status" value="1"/>
</dbReference>
<dbReference type="PIRSF" id="PIRSF000729">
    <property type="entry name" value="GK"/>
    <property type="match status" value="1"/>
</dbReference>
<dbReference type="PRINTS" id="PR00474">
    <property type="entry name" value="GLU5KINASE"/>
</dbReference>
<dbReference type="SMART" id="SM00359">
    <property type="entry name" value="PUA"/>
    <property type="match status" value="1"/>
</dbReference>
<dbReference type="SUPFAM" id="SSF53633">
    <property type="entry name" value="Carbamate kinase-like"/>
    <property type="match status" value="1"/>
</dbReference>
<dbReference type="SUPFAM" id="SSF88697">
    <property type="entry name" value="PUA domain-like"/>
    <property type="match status" value="1"/>
</dbReference>
<dbReference type="PROSITE" id="PS00902">
    <property type="entry name" value="GLUTAMATE_5_KINASE"/>
    <property type="match status" value="1"/>
</dbReference>
<dbReference type="PROSITE" id="PS50890">
    <property type="entry name" value="PUA"/>
    <property type="match status" value="1"/>
</dbReference>
<sequence>MTADTTAVSVVASATRLVAKVGSSLVTNEGRGLDRAAVAHWAAQIAALRQQGKQVVLVSSGAIAEGMARLGWRKRPSVMHELQAAAAVGQMGLCQAYEAAFAEHGLRTAQILLTHEDLADRHRYLNARSTLFALMRLGVVPIVNENDTVVTDEIRLGDNDTLGALVTNLIEADALVILTDQRGLYDSDPRKNPDAVFVAHAQAGDPELEAMAGGAGSGIGTGGMLTKILAAKRAAHSGAHTVIASGRERNVLTRLAQGECIGTELRAVLPVWSARKQWLADHLRLRGRVVLDAGAVRALLHEGKSLLPIGVIDVQGEFERGDVVACIDPQGAECARGLINYSSADTRRILRQPSSQIARILGSMTDPELMHRDNLVVI</sequence>
<protein>
    <recommendedName>
        <fullName evidence="1">Glutamate 5-kinase</fullName>
        <ecNumber evidence="1">2.7.2.11</ecNumber>
    </recommendedName>
    <alternativeName>
        <fullName evidence="1">Gamma-glutamyl kinase</fullName>
        <shortName evidence="1">GK</shortName>
    </alternativeName>
</protein>
<organism>
    <name type="scientific">Bordetella petrii (strain ATCC BAA-461 / DSM 12804 / CCUG 43448)</name>
    <dbReference type="NCBI Taxonomy" id="340100"/>
    <lineage>
        <taxon>Bacteria</taxon>
        <taxon>Pseudomonadati</taxon>
        <taxon>Pseudomonadota</taxon>
        <taxon>Betaproteobacteria</taxon>
        <taxon>Burkholderiales</taxon>
        <taxon>Alcaligenaceae</taxon>
        <taxon>Bordetella</taxon>
    </lineage>
</organism>
<evidence type="ECO:0000255" key="1">
    <source>
        <dbReference type="HAMAP-Rule" id="MF_00456"/>
    </source>
</evidence>
<gene>
    <name evidence="1" type="primary">proB</name>
    <name type="ordered locus">Bpet4680</name>
</gene>
<name>PROB_BORPD</name>
<proteinExistence type="inferred from homology"/>
<reference key="1">
    <citation type="journal article" date="2008" name="BMC Genomics">
        <title>The missing link: Bordetella petrii is endowed with both the metabolic versatility of environmental bacteria and virulence traits of pathogenic Bordetellae.</title>
        <authorList>
            <person name="Gross R."/>
            <person name="Guzman C.A."/>
            <person name="Sebaihia M."/>
            <person name="Martin dos Santos V.A.P."/>
            <person name="Pieper D.H."/>
            <person name="Koebnik R."/>
            <person name="Lechner M."/>
            <person name="Bartels D."/>
            <person name="Buhrmester J."/>
            <person name="Choudhuri J.V."/>
            <person name="Ebensen T."/>
            <person name="Gaigalat L."/>
            <person name="Herrmann S."/>
            <person name="Khachane A.N."/>
            <person name="Larisch C."/>
            <person name="Link S."/>
            <person name="Linke B."/>
            <person name="Meyer F."/>
            <person name="Mormann S."/>
            <person name="Nakunst D."/>
            <person name="Rueckert C."/>
            <person name="Schneiker-Bekel S."/>
            <person name="Schulze K."/>
            <person name="Voerholter F.-J."/>
            <person name="Yevsa T."/>
            <person name="Engle J.T."/>
            <person name="Goldman W.E."/>
            <person name="Puehler A."/>
            <person name="Goebel U.B."/>
            <person name="Goesmann A."/>
            <person name="Bloecker H."/>
            <person name="Kaiser O."/>
            <person name="Martinez-Arias R."/>
        </authorList>
    </citation>
    <scope>NUCLEOTIDE SEQUENCE [LARGE SCALE GENOMIC DNA]</scope>
    <source>
        <strain>ATCC BAA-461 / DSM 12804 / CCUG 43448</strain>
    </source>
</reference>
<keyword id="KW-0028">Amino-acid biosynthesis</keyword>
<keyword id="KW-0067">ATP-binding</keyword>
<keyword id="KW-0963">Cytoplasm</keyword>
<keyword id="KW-0418">Kinase</keyword>
<keyword id="KW-0547">Nucleotide-binding</keyword>
<keyword id="KW-0641">Proline biosynthesis</keyword>
<keyword id="KW-0808">Transferase</keyword>
<feature type="chain" id="PRO_1000125214" description="Glutamate 5-kinase">
    <location>
        <begin position="1"/>
        <end position="378"/>
    </location>
</feature>
<feature type="domain" description="PUA" evidence="1">
    <location>
        <begin position="286"/>
        <end position="364"/>
    </location>
</feature>
<feature type="binding site" evidence="1">
    <location>
        <position position="20"/>
    </location>
    <ligand>
        <name>ATP</name>
        <dbReference type="ChEBI" id="CHEBI:30616"/>
    </ligand>
</feature>
<feature type="binding site" evidence="1">
    <location>
        <position position="60"/>
    </location>
    <ligand>
        <name>substrate</name>
    </ligand>
</feature>
<feature type="binding site" evidence="1">
    <location>
        <position position="147"/>
    </location>
    <ligand>
        <name>substrate</name>
    </ligand>
</feature>
<feature type="binding site" evidence="1">
    <location>
        <position position="159"/>
    </location>
    <ligand>
        <name>substrate</name>
    </ligand>
</feature>
<feature type="binding site" evidence="1">
    <location>
        <begin position="179"/>
        <end position="180"/>
    </location>
    <ligand>
        <name>ATP</name>
        <dbReference type="ChEBI" id="CHEBI:30616"/>
    </ligand>
</feature>
<feature type="binding site" evidence="1">
    <location>
        <begin position="221"/>
        <end position="227"/>
    </location>
    <ligand>
        <name>ATP</name>
        <dbReference type="ChEBI" id="CHEBI:30616"/>
    </ligand>
</feature>
<accession>A9IFG1</accession>